<comment type="function">
    <text evidence="1 4">Plays an essential role in tail assembly by capping the rapidly polymerizing tail once it has reached its requisite length and serving as the interaction surface for the completion protein.</text>
</comment>
<comment type="subunit">
    <text evidence="2 4">Homohexamer. Interacts with completion protein gp15.</text>
</comment>
<comment type="subcellular location">
    <subcellularLocation>
        <location evidence="1 3">Virion</location>
    </subcellularLocation>
</comment>
<organismHost>
    <name type="scientific">Escherichia coli</name>
    <dbReference type="NCBI Taxonomy" id="562"/>
</organismHost>
<feature type="initiator methionine" description="Removed" evidence="3">
    <location>
        <position position="1"/>
    </location>
</feature>
<feature type="chain" id="PRO_0000164995" description="Tail tube terminator protein">
    <location>
        <begin position="2"/>
        <end position="176"/>
    </location>
</feature>
<feature type="sequence conflict" description="In Ref. 4." evidence="5" ref="4">
    <original>GRAQRPG</original>
    <variation>ASTTPVV</variation>
    <location>
        <begin position="57"/>
        <end position="63"/>
    </location>
</feature>
<feature type="sequence conflict" description="In Ref. 4; CAA26799." evidence="5" ref="4">
    <original>L</original>
    <variation>Q</variation>
    <location>
        <position position="71"/>
    </location>
</feature>
<feature type="sequence conflict" description="In Ref. 4." evidence="5" ref="4">
    <original>EF</original>
    <variation>RI</variation>
    <location>
        <begin position="142"/>
        <end position="143"/>
    </location>
</feature>
<feature type="sequence conflict" description="In Ref. 1; AAA50419." evidence="5" ref="1">
    <original>V</original>
    <variation>VLMLQFCVL</variation>
    <location>
        <position position="176"/>
    </location>
</feature>
<reference key="1">
    <citation type="journal article" date="1989" name="J. Bacteriol.">
        <title>Cloning and identification of bacteriophage T4 gene 2 product gp2 and action of gp2 on infecting DNA in vivo.</title>
        <authorList>
            <person name="Lipinska B."/>
            <person name="Rao A.S.M.K."/>
            <person name="Bolten B.M."/>
            <person name="Balakrishnan R."/>
            <person name="Goldberg E.B."/>
        </authorList>
    </citation>
    <scope>NUCLEOTIDE SEQUENCE [GENOMIC DNA]</scope>
</reference>
<reference key="2">
    <citation type="journal article" date="1989" name="Nucleic Acids Res.">
        <title>Sequencing, cloning and overexpression of genes of bacteriophage T4 between map positions 74.325 and 77.184.</title>
        <authorList>
            <person name="Koch T."/>
            <person name="Lamm N."/>
            <person name="Rueger W."/>
        </authorList>
    </citation>
    <scope>NUCLEOTIDE SEQUENCE [GENOMIC DNA]</scope>
</reference>
<reference key="3">
    <citation type="journal article" date="2003" name="Microbiol. Mol. Biol. Rev.">
        <title>Bacteriophage T4 genome.</title>
        <authorList>
            <person name="Miller E.S."/>
            <person name="Kutter E."/>
            <person name="Mosig G."/>
            <person name="Arisaka F."/>
            <person name="Kunisawa T."/>
            <person name="Ruger W."/>
        </authorList>
    </citation>
    <scope>NUCLEOTIDE SEQUENCE [LARGE SCALE GENOMIC DNA]</scope>
</reference>
<reference key="4">
    <citation type="journal article" date="1985" name="J. Mol. Biol.">
        <title>Sequence organization and control of transcription in the bacteriophage T4 tRNA region.</title>
        <authorList>
            <person name="Broida J."/>
            <person name="Abelson J."/>
        </authorList>
    </citation>
    <scope>NUCLEOTIDE SEQUENCE [GENOMIC DNA] OF 57-143</scope>
</reference>
<reference key="5">
    <citation type="journal article" date="2004" name="J. Bacteriol.">
        <title>Processing of the tail lysozyme (gp5) of bacteriophage T4.</title>
        <authorList>
            <person name="Ye N."/>
            <person name="Nemoto N."/>
        </authorList>
    </citation>
    <scope>PROTEIN SEQUENCE OF 2-8</scope>
    <scope>SUBCELLULAR LOCATION</scope>
</reference>
<reference key="6">
    <citation type="journal article" date="2000" name="J. Bacteriol.">
        <title>Bacteriophage T4 self-assembly: localization of gp3 and its role in determining tail length.</title>
        <authorList>
            <person name="Vianelli A."/>
            <person name="Wang G.R."/>
            <person name="Gingery M."/>
            <person name="Duda R.L."/>
            <person name="Eiserling F.A."/>
            <person name="Goldberg E.B."/>
        </authorList>
    </citation>
    <scope>FUNCTION</scope>
    <scope>SUBCELLULAR LOCATION</scope>
</reference>
<reference key="7">
    <citation type="journal article" date="2003" name="J. Bacteriol.">
        <title>P15 and P3, the tail completion proteins of bacteriophage T4, both form hexameric rings.</title>
        <authorList>
            <person name="Zhao L."/>
            <person name="Kanamaru S."/>
            <person name="Chaidirek C."/>
            <person name="Arisaka F."/>
        </authorList>
    </citation>
    <scope>SUBUNIT</scope>
</reference>
<reference key="8">
    <citation type="journal article" date="2013" name="J. Mol. Biol.">
        <title>The molecular architecture of the bacteriophage T4 neck.</title>
        <authorList>
            <person name="Fokine A."/>
            <person name="Zhang Z."/>
            <person name="Kanamaru S."/>
            <person name="Bowman V.D."/>
            <person name="Aksyuk A.A."/>
            <person name="Arisaka F."/>
            <person name="Rao V.B."/>
            <person name="Rossmann M.G."/>
        </authorList>
    </citation>
    <scope>INTERACTION WITH GP15</scope>
    <scope>FUNCTION</scope>
    <scope>SUBUNIT</scope>
</reference>
<keyword id="KW-0903">Direct protein sequencing</keyword>
<keyword id="KW-0426">Late protein</keyword>
<keyword id="KW-1185">Reference proteome</keyword>
<keyword id="KW-1227">Viral tail protein</keyword>
<keyword id="KW-0946">Virion</keyword>
<evidence type="ECO:0000269" key="1">
    <source>
    </source>
</evidence>
<evidence type="ECO:0000269" key="2">
    <source>
    </source>
</evidence>
<evidence type="ECO:0000269" key="3">
    <source>
    </source>
</evidence>
<evidence type="ECO:0000269" key="4">
    <source>
    </source>
</evidence>
<evidence type="ECO:0000305" key="5"/>
<sequence>MSQALQQIFNQANTTNFVVSIPHSNTTSAFTLNAQSVPIPGIRIPVTDTVTGPFGLGRAQRPGVTFEYDPLIVRFIVDEELKSWIGMYEWMLGTSNYLTGENTAQKTGPEYITLYILDNSKTEIVMSINFYKPWVSDLSEVEFSYTEDSDPALVCTATIPYTYFQVEKDGKIIAEV</sequence>
<gene>
    <name type="primary">3</name>
</gene>
<accession>P13331</accession>
<name>TTTP_BPT4</name>
<organism>
    <name type="scientific">Enterobacteria phage T4</name>
    <name type="common">Bacteriophage T4</name>
    <dbReference type="NCBI Taxonomy" id="10665"/>
    <lineage>
        <taxon>Viruses</taxon>
        <taxon>Duplodnaviria</taxon>
        <taxon>Heunggongvirae</taxon>
        <taxon>Uroviricota</taxon>
        <taxon>Caudoviricetes</taxon>
        <taxon>Straboviridae</taxon>
        <taxon>Tevenvirinae</taxon>
        <taxon>Tequatrovirus</taxon>
    </lineage>
</organism>
<dbReference type="EMBL" id="M23012">
    <property type="protein sequence ID" value="AAA50419.1"/>
    <property type="molecule type" value="Genomic_DNA"/>
</dbReference>
<dbReference type="EMBL" id="AF158101">
    <property type="protein sequence ID" value="AAD42439.1"/>
    <property type="molecule type" value="Genomic_DNA"/>
</dbReference>
<dbReference type="EMBL" id="X03016">
    <property type="protein sequence ID" value="CAA26799.1"/>
    <property type="molecule type" value="Genomic_DNA"/>
</dbReference>
<dbReference type="EMBL" id="X14845">
    <property type="protein sequence ID" value="CAA32952.1"/>
    <property type="molecule type" value="Genomic_DNA"/>
</dbReference>
<dbReference type="PIR" id="C32254">
    <property type="entry name" value="ZRBPT9"/>
</dbReference>
<dbReference type="RefSeq" id="NP_049753.1">
    <property type="nucleotide sequence ID" value="NC_000866.4"/>
</dbReference>
<dbReference type="SMR" id="P13331"/>
<dbReference type="TCDB" id="1.K.1.1.1">
    <property type="family name" value="the gp27/5 t4-baseplate (t4-bp) family"/>
</dbReference>
<dbReference type="GeneID" id="1258776"/>
<dbReference type="KEGG" id="vg:1258776"/>
<dbReference type="OrthoDB" id="11402at10239"/>
<dbReference type="Proteomes" id="UP000009087">
    <property type="component" value="Segment"/>
</dbReference>
<dbReference type="GO" id="GO:0098015">
    <property type="term" value="C:virus tail"/>
    <property type="evidence" value="ECO:0007669"/>
    <property type="project" value="UniProtKB-KW"/>
</dbReference>
<dbReference type="GO" id="GO:0005198">
    <property type="term" value="F:structural molecule activity"/>
    <property type="evidence" value="ECO:0007669"/>
    <property type="project" value="InterPro"/>
</dbReference>
<dbReference type="InterPro" id="IPR010667">
    <property type="entry name" value="Phage_T4_Gp19"/>
</dbReference>
<dbReference type="Pfam" id="PF06841">
    <property type="entry name" value="Phage_T4_gp19"/>
    <property type="match status" value="1"/>
</dbReference>
<proteinExistence type="evidence at protein level"/>
<protein>
    <recommendedName>
        <fullName evidence="5">Tail tube terminator protein</fullName>
        <shortName>TrP</shortName>
    </recommendedName>
    <alternativeName>
        <fullName>Gene product 3</fullName>
        <shortName>gp3</shortName>
    </alternativeName>
    <alternativeName>
        <fullName evidence="5">Tail sheath-stabilizing protein</fullName>
    </alternativeName>
    <alternativeName>
        <fullName evidence="5">Tail-to-head joining protein</fullName>
        <shortName>THJP</shortName>
    </alternativeName>
</protein>